<name>ATPG_ACIF2</name>
<sequence>MANAKEIRGQIKSVKNTRKITRAMEMVAASKMRRAQERMRAARPYAEKIREVLGHLAQAHPEYEHPLMQVRPVKKAGFLVVTTDRGLCGGLNVNVLRNVVQKMRELHEEGVESNLAVVGNKGLGFLRRHGAHLVAELNGLGDSPHLGDMIGPIRAMADAYAKGEVDVVYLVSSRFVNTMLQRATVEQLLPVEKPTASAEQRAELWDYIYEPEARPVLDRLMQRYVESVVYQAVIEHLACEQSARMVAMKSASDNAKRMVDDLQLAYNKARQAAITQEIAEISAGAAAV</sequence>
<protein>
    <recommendedName>
        <fullName evidence="1">ATP synthase gamma chain</fullName>
    </recommendedName>
    <alternativeName>
        <fullName evidence="1">ATP synthase F1 sector gamma subunit</fullName>
    </alternativeName>
    <alternativeName>
        <fullName evidence="1">F-ATPase gamma subunit</fullName>
    </alternativeName>
</protein>
<keyword id="KW-0066">ATP synthesis</keyword>
<keyword id="KW-0997">Cell inner membrane</keyword>
<keyword id="KW-1003">Cell membrane</keyword>
<keyword id="KW-0139">CF(1)</keyword>
<keyword id="KW-0375">Hydrogen ion transport</keyword>
<keyword id="KW-0406">Ion transport</keyword>
<keyword id="KW-0472">Membrane</keyword>
<keyword id="KW-1185">Reference proteome</keyword>
<keyword id="KW-0813">Transport</keyword>
<organism>
    <name type="scientific">Acidithiobacillus ferrooxidans (strain ATCC 23270 / DSM 14882 / CIP 104768 / NCIMB 8455)</name>
    <name type="common">Ferrobacillus ferrooxidans (strain ATCC 23270)</name>
    <dbReference type="NCBI Taxonomy" id="243159"/>
    <lineage>
        <taxon>Bacteria</taxon>
        <taxon>Pseudomonadati</taxon>
        <taxon>Pseudomonadota</taxon>
        <taxon>Acidithiobacillia</taxon>
        <taxon>Acidithiobacillales</taxon>
        <taxon>Acidithiobacillaceae</taxon>
        <taxon>Acidithiobacillus</taxon>
    </lineage>
</organism>
<gene>
    <name evidence="1" type="primary">atpG</name>
    <name type="ordered locus">AFE_3204</name>
</gene>
<feature type="chain" id="PRO_1000134098" description="ATP synthase gamma chain">
    <location>
        <begin position="1"/>
        <end position="288"/>
    </location>
</feature>
<reference key="1">
    <citation type="journal article" date="2008" name="BMC Genomics">
        <title>Acidithiobacillus ferrooxidans metabolism: from genome sequence to industrial applications.</title>
        <authorList>
            <person name="Valdes J."/>
            <person name="Pedroso I."/>
            <person name="Quatrini R."/>
            <person name="Dodson R.J."/>
            <person name="Tettelin H."/>
            <person name="Blake R. II"/>
            <person name="Eisen J.A."/>
            <person name="Holmes D.S."/>
        </authorList>
    </citation>
    <scope>NUCLEOTIDE SEQUENCE [LARGE SCALE GENOMIC DNA]</scope>
    <source>
        <strain>ATCC 23270 / DSM 14882 / CIP 104768 / NCIMB 8455</strain>
    </source>
</reference>
<evidence type="ECO:0000255" key="1">
    <source>
        <dbReference type="HAMAP-Rule" id="MF_00815"/>
    </source>
</evidence>
<accession>B7JB85</accession>
<proteinExistence type="inferred from homology"/>
<dbReference type="EMBL" id="CP001219">
    <property type="protein sequence ID" value="ACK80355.1"/>
    <property type="molecule type" value="Genomic_DNA"/>
</dbReference>
<dbReference type="RefSeq" id="WP_012537656.1">
    <property type="nucleotide sequence ID" value="NC_011761.1"/>
</dbReference>
<dbReference type="SMR" id="B7JB85"/>
<dbReference type="STRING" id="243159.AFE_3204"/>
<dbReference type="PaxDb" id="243159-AFE_3204"/>
<dbReference type="GeneID" id="65282188"/>
<dbReference type="KEGG" id="afr:AFE_3204"/>
<dbReference type="eggNOG" id="COG0224">
    <property type="taxonomic scope" value="Bacteria"/>
</dbReference>
<dbReference type="HOGENOM" id="CLU_050669_0_1_6"/>
<dbReference type="Proteomes" id="UP000001362">
    <property type="component" value="Chromosome"/>
</dbReference>
<dbReference type="GO" id="GO:0005886">
    <property type="term" value="C:plasma membrane"/>
    <property type="evidence" value="ECO:0007669"/>
    <property type="project" value="UniProtKB-SubCell"/>
</dbReference>
<dbReference type="GO" id="GO:0045259">
    <property type="term" value="C:proton-transporting ATP synthase complex"/>
    <property type="evidence" value="ECO:0007669"/>
    <property type="project" value="UniProtKB-KW"/>
</dbReference>
<dbReference type="GO" id="GO:0005524">
    <property type="term" value="F:ATP binding"/>
    <property type="evidence" value="ECO:0007669"/>
    <property type="project" value="UniProtKB-UniRule"/>
</dbReference>
<dbReference type="GO" id="GO:0046933">
    <property type="term" value="F:proton-transporting ATP synthase activity, rotational mechanism"/>
    <property type="evidence" value="ECO:0007669"/>
    <property type="project" value="UniProtKB-UniRule"/>
</dbReference>
<dbReference type="GO" id="GO:0042777">
    <property type="term" value="P:proton motive force-driven plasma membrane ATP synthesis"/>
    <property type="evidence" value="ECO:0007669"/>
    <property type="project" value="UniProtKB-UniRule"/>
</dbReference>
<dbReference type="CDD" id="cd12151">
    <property type="entry name" value="F1-ATPase_gamma"/>
    <property type="match status" value="1"/>
</dbReference>
<dbReference type="FunFam" id="1.10.287.80:FF:000005">
    <property type="entry name" value="ATP synthase gamma chain"/>
    <property type="match status" value="1"/>
</dbReference>
<dbReference type="Gene3D" id="3.40.1380.10">
    <property type="match status" value="1"/>
</dbReference>
<dbReference type="Gene3D" id="1.10.287.80">
    <property type="entry name" value="ATP synthase, gamma subunit, helix hairpin domain"/>
    <property type="match status" value="1"/>
</dbReference>
<dbReference type="HAMAP" id="MF_00815">
    <property type="entry name" value="ATP_synth_gamma_bact"/>
    <property type="match status" value="1"/>
</dbReference>
<dbReference type="InterPro" id="IPR035968">
    <property type="entry name" value="ATP_synth_F1_ATPase_gsu"/>
</dbReference>
<dbReference type="InterPro" id="IPR000131">
    <property type="entry name" value="ATP_synth_F1_gsu"/>
</dbReference>
<dbReference type="InterPro" id="IPR023632">
    <property type="entry name" value="ATP_synth_F1_gsu_CS"/>
</dbReference>
<dbReference type="NCBIfam" id="TIGR01146">
    <property type="entry name" value="ATPsyn_F1gamma"/>
    <property type="match status" value="1"/>
</dbReference>
<dbReference type="NCBIfam" id="NF004144">
    <property type="entry name" value="PRK05621.1-1"/>
    <property type="match status" value="1"/>
</dbReference>
<dbReference type="PANTHER" id="PTHR11693">
    <property type="entry name" value="ATP SYNTHASE GAMMA CHAIN"/>
    <property type="match status" value="1"/>
</dbReference>
<dbReference type="PANTHER" id="PTHR11693:SF22">
    <property type="entry name" value="ATP SYNTHASE SUBUNIT GAMMA, MITOCHONDRIAL"/>
    <property type="match status" value="1"/>
</dbReference>
<dbReference type="Pfam" id="PF00231">
    <property type="entry name" value="ATP-synt"/>
    <property type="match status" value="1"/>
</dbReference>
<dbReference type="PRINTS" id="PR00126">
    <property type="entry name" value="ATPASEGAMMA"/>
</dbReference>
<dbReference type="SUPFAM" id="SSF52943">
    <property type="entry name" value="ATP synthase (F1-ATPase), gamma subunit"/>
    <property type="match status" value="1"/>
</dbReference>
<dbReference type="PROSITE" id="PS00153">
    <property type="entry name" value="ATPASE_GAMMA"/>
    <property type="match status" value="1"/>
</dbReference>
<comment type="function">
    <text evidence="1">Produces ATP from ADP in the presence of a proton gradient across the membrane. The gamma chain is believed to be important in regulating ATPase activity and the flow of protons through the CF(0) complex.</text>
</comment>
<comment type="subunit">
    <text evidence="1">F-type ATPases have 2 components, CF(1) - the catalytic core - and CF(0) - the membrane proton channel. CF(1) has five subunits: alpha(3), beta(3), gamma(1), delta(1), epsilon(1). CF(0) has three main subunits: a, b and c.</text>
</comment>
<comment type="subcellular location">
    <subcellularLocation>
        <location evidence="1">Cell inner membrane</location>
        <topology evidence="1">Peripheral membrane protein</topology>
    </subcellularLocation>
</comment>
<comment type="similarity">
    <text evidence="1">Belongs to the ATPase gamma chain family.</text>
</comment>